<comment type="function">
    <text evidence="1">Binds 16S rRNA, required for the assembly of 30S particles and may also be responsible for determining the conformation of the 16S rRNA at the A site.</text>
</comment>
<comment type="subunit">
    <text evidence="1">Part of the 30S ribosomal subunit. Contacts proteins S3 and S10.</text>
</comment>
<comment type="similarity">
    <text evidence="1">Belongs to the universal ribosomal protein uS14 family.</text>
</comment>
<proteinExistence type="inferred from homology"/>
<feature type="chain" id="PRO_1000128286" description="Small ribosomal subunit protein uS14">
    <location>
        <begin position="1"/>
        <end position="101"/>
    </location>
</feature>
<gene>
    <name evidence="1" type="primary">rpsN</name>
    <name type="ordered locus">AHA_0322</name>
</gene>
<name>RS14_AERHH</name>
<organism>
    <name type="scientific">Aeromonas hydrophila subsp. hydrophila (strain ATCC 7966 / DSM 30187 / BCRC 13018 / CCUG 14551 / JCM 1027 / KCTC 2358 / NCIMB 9240 / NCTC 8049)</name>
    <dbReference type="NCBI Taxonomy" id="380703"/>
    <lineage>
        <taxon>Bacteria</taxon>
        <taxon>Pseudomonadati</taxon>
        <taxon>Pseudomonadota</taxon>
        <taxon>Gammaproteobacteria</taxon>
        <taxon>Aeromonadales</taxon>
        <taxon>Aeromonadaceae</taxon>
        <taxon>Aeromonas</taxon>
    </lineage>
</organism>
<accession>A0KF34</accession>
<keyword id="KW-1185">Reference proteome</keyword>
<keyword id="KW-0687">Ribonucleoprotein</keyword>
<keyword id="KW-0689">Ribosomal protein</keyword>
<keyword id="KW-0694">RNA-binding</keyword>
<keyword id="KW-0699">rRNA-binding</keyword>
<evidence type="ECO:0000255" key="1">
    <source>
        <dbReference type="HAMAP-Rule" id="MF_00537"/>
    </source>
</evidence>
<evidence type="ECO:0000305" key="2"/>
<protein>
    <recommendedName>
        <fullName evidence="1">Small ribosomal subunit protein uS14</fullName>
    </recommendedName>
    <alternativeName>
        <fullName evidence="2">30S ribosomal protein S14</fullName>
    </alternativeName>
</protein>
<dbReference type="EMBL" id="CP000462">
    <property type="protein sequence ID" value="ABK36422.1"/>
    <property type="molecule type" value="Genomic_DNA"/>
</dbReference>
<dbReference type="RefSeq" id="WP_011704315.1">
    <property type="nucleotide sequence ID" value="NC_008570.1"/>
</dbReference>
<dbReference type="RefSeq" id="YP_854856.1">
    <property type="nucleotide sequence ID" value="NC_008570.1"/>
</dbReference>
<dbReference type="SMR" id="A0KF34"/>
<dbReference type="STRING" id="380703.AHA_0322"/>
<dbReference type="EnsemblBacteria" id="ABK36422">
    <property type="protein sequence ID" value="ABK36422"/>
    <property type="gene ID" value="AHA_0322"/>
</dbReference>
<dbReference type="GeneID" id="4489527"/>
<dbReference type="KEGG" id="aha:AHA_0322"/>
<dbReference type="PATRIC" id="fig|380703.7.peg.311"/>
<dbReference type="eggNOG" id="COG0199">
    <property type="taxonomic scope" value="Bacteria"/>
</dbReference>
<dbReference type="HOGENOM" id="CLU_139869_0_1_6"/>
<dbReference type="OrthoDB" id="9810484at2"/>
<dbReference type="Proteomes" id="UP000000756">
    <property type="component" value="Chromosome"/>
</dbReference>
<dbReference type="GO" id="GO:0005737">
    <property type="term" value="C:cytoplasm"/>
    <property type="evidence" value="ECO:0007669"/>
    <property type="project" value="UniProtKB-ARBA"/>
</dbReference>
<dbReference type="GO" id="GO:0015935">
    <property type="term" value="C:small ribosomal subunit"/>
    <property type="evidence" value="ECO:0007669"/>
    <property type="project" value="TreeGrafter"/>
</dbReference>
<dbReference type="GO" id="GO:0019843">
    <property type="term" value="F:rRNA binding"/>
    <property type="evidence" value="ECO:0007669"/>
    <property type="project" value="UniProtKB-UniRule"/>
</dbReference>
<dbReference type="GO" id="GO:0003735">
    <property type="term" value="F:structural constituent of ribosome"/>
    <property type="evidence" value="ECO:0007669"/>
    <property type="project" value="InterPro"/>
</dbReference>
<dbReference type="GO" id="GO:0006412">
    <property type="term" value="P:translation"/>
    <property type="evidence" value="ECO:0007669"/>
    <property type="project" value="UniProtKB-UniRule"/>
</dbReference>
<dbReference type="FunFam" id="1.10.287.1480:FF:000001">
    <property type="entry name" value="30S ribosomal protein S14"/>
    <property type="match status" value="1"/>
</dbReference>
<dbReference type="Gene3D" id="1.10.287.1480">
    <property type="match status" value="1"/>
</dbReference>
<dbReference type="HAMAP" id="MF_00537">
    <property type="entry name" value="Ribosomal_uS14_1"/>
    <property type="match status" value="1"/>
</dbReference>
<dbReference type="InterPro" id="IPR001209">
    <property type="entry name" value="Ribosomal_uS14"/>
</dbReference>
<dbReference type="InterPro" id="IPR023036">
    <property type="entry name" value="Ribosomal_uS14_bac/plastid"/>
</dbReference>
<dbReference type="InterPro" id="IPR018271">
    <property type="entry name" value="Ribosomal_uS14_CS"/>
</dbReference>
<dbReference type="NCBIfam" id="NF006477">
    <property type="entry name" value="PRK08881.1"/>
    <property type="match status" value="1"/>
</dbReference>
<dbReference type="PANTHER" id="PTHR19836">
    <property type="entry name" value="30S RIBOSOMAL PROTEIN S14"/>
    <property type="match status" value="1"/>
</dbReference>
<dbReference type="PANTHER" id="PTHR19836:SF19">
    <property type="entry name" value="SMALL RIBOSOMAL SUBUNIT PROTEIN US14M"/>
    <property type="match status" value="1"/>
</dbReference>
<dbReference type="Pfam" id="PF00253">
    <property type="entry name" value="Ribosomal_S14"/>
    <property type="match status" value="1"/>
</dbReference>
<dbReference type="SUPFAM" id="SSF57716">
    <property type="entry name" value="Glucocorticoid receptor-like (DNA-binding domain)"/>
    <property type="match status" value="1"/>
</dbReference>
<dbReference type="PROSITE" id="PS00527">
    <property type="entry name" value="RIBOSOMAL_S14"/>
    <property type="match status" value="1"/>
</dbReference>
<sequence length="101" mass="11516">MAKTSMKAREAKRAKLVAKFASKRTELKAIIVDMNASEEARWDAVLQLQQLPRDSSPSRQRNRCNITGRPHGFLRKFGLSRIKVREHAMKGEIPGLKKASW</sequence>
<reference key="1">
    <citation type="journal article" date="2006" name="J. Bacteriol.">
        <title>Genome sequence of Aeromonas hydrophila ATCC 7966T: jack of all trades.</title>
        <authorList>
            <person name="Seshadri R."/>
            <person name="Joseph S.W."/>
            <person name="Chopra A.K."/>
            <person name="Sha J."/>
            <person name="Shaw J."/>
            <person name="Graf J."/>
            <person name="Haft D.H."/>
            <person name="Wu M."/>
            <person name="Ren Q."/>
            <person name="Rosovitz M.J."/>
            <person name="Madupu R."/>
            <person name="Tallon L."/>
            <person name="Kim M."/>
            <person name="Jin S."/>
            <person name="Vuong H."/>
            <person name="Stine O.C."/>
            <person name="Ali A."/>
            <person name="Horneman A.J."/>
            <person name="Heidelberg J.F."/>
        </authorList>
    </citation>
    <scope>NUCLEOTIDE SEQUENCE [LARGE SCALE GENOMIC DNA]</scope>
    <source>
        <strain>ATCC 7966 / DSM 30187 / BCRC 13018 / CCUG 14551 / JCM 1027 / KCTC 2358 / NCIMB 9240 / NCTC 8049</strain>
    </source>
</reference>